<protein>
    <recommendedName>
        <fullName evidence="1">Fructose-1,6-bisphosphatase class 1</fullName>
        <shortName evidence="1">FBPase class 1</shortName>
        <ecNumber evidence="1">3.1.3.11</ecNumber>
    </recommendedName>
    <alternativeName>
        <fullName evidence="1">D-fructose-1,6-bisphosphate 1-phosphohydrolase class 1</fullName>
    </alternativeName>
</protein>
<gene>
    <name evidence="1" type="primary">fbp</name>
    <name type="ordered locus">Tery_0682</name>
</gene>
<name>F16PA_TRIEI</name>
<proteinExistence type="inferred from homology"/>
<evidence type="ECO:0000255" key="1">
    <source>
        <dbReference type="HAMAP-Rule" id="MF_01855"/>
    </source>
</evidence>
<dbReference type="EC" id="3.1.3.11" evidence="1"/>
<dbReference type="EMBL" id="CP000393">
    <property type="protein sequence ID" value="ABG50119.1"/>
    <property type="molecule type" value="Genomic_DNA"/>
</dbReference>
<dbReference type="RefSeq" id="WP_011610512.1">
    <property type="nucleotide sequence ID" value="NC_008312.1"/>
</dbReference>
<dbReference type="SMR" id="Q118F5"/>
<dbReference type="STRING" id="203124.Tery_0682"/>
<dbReference type="KEGG" id="ter:Tery_0682"/>
<dbReference type="eggNOG" id="COG0158">
    <property type="taxonomic scope" value="Bacteria"/>
</dbReference>
<dbReference type="HOGENOM" id="CLU_039977_2_2_3"/>
<dbReference type="OrthoDB" id="9806756at2"/>
<dbReference type="UniPathway" id="UPA00116"/>
<dbReference type="GO" id="GO:0005829">
    <property type="term" value="C:cytosol"/>
    <property type="evidence" value="ECO:0007669"/>
    <property type="project" value="TreeGrafter"/>
</dbReference>
<dbReference type="GO" id="GO:0042132">
    <property type="term" value="F:fructose 1,6-bisphosphate 1-phosphatase activity"/>
    <property type="evidence" value="ECO:0007669"/>
    <property type="project" value="UniProtKB-UniRule"/>
</dbReference>
<dbReference type="GO" id="GO:0000287">
    <property type="term" value="F:magnesium ion binding"/>
    <property type="evidence" value="ECO:0007669"/>
    <property type="project" value="UniProtKB-UniRule"/>
</dbReference>
<dbReference type="GO" id="GO:0030388">
    <property type="term" value="P:fructose 1,6-bisphosphate metabolic process"/>
    <property type="evidence" value="ECO:0007669"/>
    <property type="project" value="TreeGrafter"/>
</dbReference>
<dbReference type="GO" id="GO:0006002">
    <property type="term" value="P:fructose 6-phosphate metabolic process"/>
    <property type="evidence" value="ECO:0007669"/>
    <property type="project" value="TreeGrafter"/>
</dbReference>
<dbReference type="GO" id="GO:0006000">
    <property type="term" value="P:fructose metabolic process"/>
    <property type="evidence" value="ECO:0007669"/>
    <property type="project" value="TreeGrafter"/>
</dbReference>
<dbReference type="GO" id="GO:0006094">
    <property type="term" value="P:gluconeogenesis"/>
    <property type="evidence" value="ECO:0007669"/>
    <property type="project" value="UniProtKB-UniRule"/>
</dbReference>
<dbReference type="GO" id="GO:0019253">
    <property type="term" value="P:reductive pentose-phosphate cycle"/>
    <property type="evidence" value="ECO:0007669"/>
    <property type="project" value="UniProtKB-UniPathway"/>
</dbReference>
<dbReference type="GO" id="GO:0005986">
    <property type="term" value="P:sucrose biosynthetic process"/>
    <property type="evidence" value="ECO:0007669"/>
    <property type="project" value="TreeGrafter"/>
</dbReference>
<dbReference type="CDD" id="cd00354">
    <property type="entry name" value="FBPase"/>
    <property type="match status" value="1"/>
</dbReference>
<dbReference type="FunFam" id="3.30.540.10:FF:000002">
    <property type="entry name" value="Fructose-1,6-bisphosphatase class 1"/>
    <property type="match status" value="1"/>
</dbReference>
<dbReference type="Gene3D" id="3.40.190.80">
    <property type="match status" value="1"/>
</dbReference>
<dbReference type="Gene3D" id="3.30.540.10">
    <property type="entry name" value="Fructose-1,6-Bisphosphatase, subunit A, domain 1"/>
    <property type="match status" value="1"/>
</dbReference>
<dbReference type="HAMAP" id="MF_01855">
    <property type="entry name" value="FBPase_class1"/>
    <property type="match status" value="1"/>
</dbReference>
<dbReference type="InterPro" id="IPR044015">
    <property type="entry name" value="FBPase_C_dom"/>
</dbReference>
<dbReference type="InterPro" id="IPR000146">
    <property type="entry name" value="FBPase_class-1"/>
</dbReference>
<dbReference type="InterPro" id="IPR033391">
    <property type="entry name" value="FBPase_N"/>
</dbReference>
<dbReference type="InterPro" id="IPR028343">
    <property type="entry name" value="FBPtase"/>
</dbReference>
<dbReference type="InterPro" id="IPR020548">
    <property type="entry name" value="Fructose_bisphosphatase_AS"/>
</dbReference>
<dbReference type="NCBIfam" id="NF006778">
    <property type="entry name" value="PRK09293.1-1"/>
    <property type="match status" value="1"/>
</dbReference>
<dbReference type="PANTHER" id="PTHR11556">
    <property type="entry name" value="FRUCTOSE-1,6-BISPHOSPHATASE-RELATED"/>
    <property type="match status" value="1"/>
</dbReference>
<dbReference type="PANTHER" id="PTHR11556:SF35">
    <property type="entry name" value="SEDOHEPTULOSE-1,7-BISPHOSPHATASE, CHLOROPLASTIC"/>
    <property type="match status" value="1"/>
</dbReference>
<dbReference type="Pfam" id="PF00316">
    <property type="entry name" value="FBPase"/>
    <property type="match status" value="1"/>
</dbReference>
<dbReference type="Pfam" id="PF18913">
    <property type="entry name" value="FBPase_C"/>
    <property type="match status" value="1"/>
</dbReference>
<dbReference type="PIRSF" id="PIRSF500210">
    <property type="entry name" value="FBPtase"/>
    <property type="match status" value="1"/>
</dbReference>
<dbReference type="PIRSF" id="PIRSF000904">
    <property type="entry name" value="FBPtase_SBPase"/>
    <property type="match status" value="1"/>
</dbReference>
<dbReference type="PRINTS" id="PR00115">
    <property type="entry name" value="F16BPHPHTASE"/>
</dbReference>
<dbReference type="SUPFAM" id="SSF56655">
    <property type="entry name" value="Carbohydrate phosphatase"/>
    <property type="match status" value="1"/>
</dbReference>
<dbReference type="PROSITE" id="PS00124">
    <property type="entry name" value="FBPASE"/>
    <property type="match status" value="1"/>
</dbReference>
<sequence>MVNTQAREDLHIRLEETQLLDRDCTTLSRHVLQQLHFSPDAQDISSLMNRIGLAGKLIARRLTRAGLLEDTLGFTGTVNVQGESVKKMDIYANDVFISVFKQSGLVCRLASEEMEKPYYIPENCPIGRYTLLYDPLDGSSNLDTNLNVGSIFSVRQQEGNDENGLAQDLLQNGHKQIAAGYILYGPSTMLVYSIGQGVHAFTLDPSLGEFILVNENIKIPEHGPVYSVNEGNFWQWDDSMRDYIRYVHRHEGYTARYGGALVGDFHRILYQGGVFLYPGTVKKPEGKLRLLYESAPMGYLVEQAGGRASTGTEEILDVVADQLHQRTPLIIGSKEDVALVESFIKEQKRISNQG</sequence>
<comment type="catalytic activity">
    <reaction evidence="1">
        <text>beta-D-fructose 1,6-bisphosphate + H2O = beta-D-fructose 6-phosphate + phosphate</text>
        <dbReference type="Rhea" id="RHEA:11064"/>
        <dbReference type="ChEBI" id="CHEBI:15377"/>
        <dbReference type="ChEBI" id="CHEBI:32966"/>
        <dbReference type="ChEBI" id="CHEBI:43474"/>
        <dbReference type="ChEBI" id="CHEBI:57634"/>
        <dbReference type="EC" id="3.1.3.11"/>
    </reaction>
</comment>
<comment type="cofactor">
    <cofactor evidence="1">
        <name>Mg(2+)</name>
        <dbReference type="ChEBI" id="CHEBI:18420"/>
    </cofactor>
    <text evidence="1">Binds 2 magnesium ions per subunit.</text>
</comment>
<comment type="pathway">
    <text evidence="1">Carbohydrate biosynthesis; Calvin cycle.</text>
</comment>
<comment type="subunit">
    <text evidence="1">Homotetramer.</text>
</comment>
<comment type="subcellular location">
    <subcellularLocation>
        <location evidence="1">Cytoplasm</location>
    </subcellularLocation>
</comment>
<comment type="similarity">
    <text evidence="1">Belongs to the FBPase class 1 family.</text>
</comment>
<feature type="chain" id="PRO_0000364736" description="Fructose-1,6-bisphosphatase class 1">
    <location>
        <begin position="1"/>
        <end position="354"/>
    </location>
</feature>
<feature type="binding site" evidence="1">
    <location>
        <position position="112"/>
    </location>
    <ligand>
        <name>Mg(2+)</name>
        <dbReference type="ChEBI" id="CHEBI:18420"/>
        <label>1</label>
    </ligand>
</feature>
<feature type="binding site" evidence="1">
    <location>
        <position position="134"/>
    </location>
    <ligand>
        <name>Mg(2+)</name>
        <dbReference type="ChEBI" id="CHEBI:18420"/>
        <label>1</label>
    </ligand>
</feature>
<feature type="binding site" evidence="1">
    <location>
        <position position="134"/>
    </location>
    <ligand>
        <name>Mg(2+)</name>
        <dbReference type="ChEBI" id="CHEBI:18420"/>
        <label>2</label>
    </ligand>
</feature>
<feature type="binding site" evidence="1">
    <location>
        <position position="136"/>
    </location>
    <ligand>
        <name>Mg(2+)</name>
        <dbReference type="ChEBI" id="CHEBI:18420"/>
        <label>1</label>
    </ligand>
</feature>
<feature type="binding site" evidence="1">
    <location>
        <begin position="137"/>
        <end position="140"/>
    </location>
    <ligand>
        <name>substrate</name>
    </ligand>
</feature>
<feature type="binding site" evidence="1">
    <location>
        <position position="137"/>
    </location>
    <ligand>
        <name>Mg(2+)</name>
        <dbReference type="ChEBI" id="CHEBI:18420"/>
        <label>2</label>
    </ligand>
</feature>
<feature type="binding site" evidence="1">
    <location>
        <position position="229"/>
    </location>
    <ligand>
        <name>substrate</name>
    </ligand>
</feature>
<feature type="binding site" evidence="1">
    <location>
        <position position="257"/>
    </location>
    <ligand>
        <name>substrate</name>
    </ligand>
</feature>
<feature type="binding site" evidence="1">
    <location>
        <position position="287"/>
    </location>
    <ligand>
        <name>substrate</name>
    </ligand>
</feature>
<feature type="binding site" evidence="1">
    <location>
        <position position="293"/>
    </location>
    <ligand>
        <name>Mg(2+)</name>
        <dbReference type="ChEBI" id="CHEBI:18420"/>
        <label>2</label>
    </ligand>
</feature>
<reference key="1">
    <citation type="journal article" date="2015" name="Proc. Natl. Acad. Sci. U.S.A.">
        <title>Trichodesmium genome maintains abundant, widespread noncoding DNA in situ, despite oligotrophic lifestyle.</title>
        <authorList>
            <person name="Walworth N."/>
            <person name="Pfreundt U."/>
            <person name="Nelson W.C."/>
            <person name="Mincer T."/>
            <person name="Heidelberg J.F."/>
            <person name="Fu F."/>
            <person name="Waterbury J.B."/>
            <person name="Glavina del Rio T."/>
            <person name="Goodwin L."/>
            <person name="Kyrpides N.C."/>
            <person name="Land M.L."/>
            <person name="Woyke T."/>
            <person name="Hutchins D.A."/>
            <person name="Hess W.R."/>
            <person name="Webb E.A."/>
        </authorList>
    </citation>
    <scope>NUCLEOTIDE SEQUENCE [LARGE SCALE GENOMIC DNA]</scope>
    <source>
        <strain>IMS101</strain>
    </source>
</reference>
<organism>
    <name type="scientific">Trichodesmium erythraeum (strain IMS101)</name>
    <dbReference type="NCBI Taxonomy" id="203124"/>
    <lineage>
        <taxon>Bacteria</taxon>
        <taxon>Bacillati</taxon>
        <taxon>Cyanobacteriota</taxon>
        <taxon>Cyanophyceae</taxon>
        <taxon>Oscillatoriophycideae</taxon>
        <taxon>Oscillatoriales</taxon>
        <taxon>Microcoleaceae</taxon>
        <taxon>Trichodesmium</taxon>
    </lineage>
</organism>
<keyword id="KW-0113">Calvin cycle</keyword>
<keyword id="KW-0119">Carbohydrate metabolism</keyword>
<keyword id="KW-0963">Cytoplasm</keyword>
<keyword id="KW-0378">Hydrolase</keyword>
<keyword id="KW-0460">Magnesium</keyword>
<keyword id="KW-0479">Metal-binding</keyword>
<accession>Q118F5</accession>